<feature type="chain" id="PRO_0000185786" description="Glutathione S-transferase A4">
    <location>
        <begin position="1"/>
        <end position="222"/>
    </location>
</feature>
<feature type="domain" description="GST N-terminal">
    <location>
        <begin position="3"/>
        <end position="83"/>
    </location>
</feature>
<feature type="domain" description="GST C-terminal">
    <location>
        <begin position="85"/>
        <end position="208"/>
    </location>
</feature>
<feature type="binding site" evidence="1">
    <location>
        <position position="9"/>
    </location>
    <ligand>
        <name>glutathione</name>
        <dbReference type="ChEBI" id="CHEBI:57925"/>
    </ligand>
</feature>
<feature type="binding site" evidence="3">
    <location>
        <begin position="54"/>
        <end position="55"/>
    </location>
    <ligand>
        <name>glutathione</name>
        <dbReference type="ChEBI" id="CHEBI:57925"/>
    </ligand>
</feature>
<feature type="binding site" evidence="1">
    <location>
        <begin position="67"/>
        <end position="68"/>
    </location>
    <ligand>
        <name>glutathione</name>
        <dbReference type="ChEBI" id="CHEBI:57925"/>
    </ligand>
</feature>
<feature type="binding site" evidence="9">
    <location>
        <position position="212"/>
    </location>
    <ligand>
        <name>substrate</name>
    </ligand>
</feature>
<feature type="modified residue" description="N-acetylmethionine" evidence="2">
    <location>
        <position position="1"/>
    </location>
</feature>
<feature type="splice variant" id="VSP_056473" description="In isoform 2." evidence="7 8">
    <location>
        <begin position="1"/>
        <end position="93"/>
    </location>
</feature>
<feature type="sequence variant" id="VAR_022210" description="In dbSNP:rs45551133." evidence="6">
    <original>L</original>
    <variation>P</variation>
    <location>
        <position position="100"/>
    </location>
</feature>
<feature type="sequence variant" id="VAR_022211" description="In dbSNP:rs4147617." evidence="6">
    <original>T</original>
    <variation>A</variation>
    <location>
        <position position="163"/>
    </location>
</feature>
<feature type="mutagenesis site" description="Reduces catalytic activity 70-fold." evidence="5">
    <original>Y</original>
    <variation>F</variation>
    <location>
        <position position="9"/>
    </location>
</feature>
<feature type="mutagenesis site" description="Strongly reduced activity towards 4-hydroxynon-2-enal and 1-chloro-2,4-dinitrobenzene." evidence="4">
    <original>Y</original>
    <variation>A</variation>
    <variation>F</variation>
    <variation>S</variation>
    <location>
        <position position="212"/>
    </location>
</feature>
<feature type="strand" evidence="11">
    <location>
        <begin position="6"/>
        <end position="9"/>
    </location>
</feature>
<feature type="turn" evidence="11">
    <location>
        <begin position="14"/>
        <end position="16"/>
    </location>
</feature>
<feature type="helix" evidence="11">
    <location>
        <begin position="17"/>
        <end position="25"/>
    </location>
</feature>
<feature type="strand" evidence="11">
    <location>
        <begin position="31"/>
        <end position="34"/>
    </location>
</feature>
<feature type="helix" evidence="11">
    <location>
        <begin position="38"/>
        <end position="46"/>
    </location>
</feature>
<feature type="strand" evidence="11">
    <location>
        <begin position="57"/>
        <end position="60"/>
    </location>
</feature>
<feature type="strand" evidence="11">
    <location>
        <begin position="63"/>
        <end position="67"/>
    </location>
</feature>
<feature type="helix" evidence="11">
    <location>
        <begin position="68"/>
        <end position="78"/>
    </location>
</feature>
<feature type="helix" evidence="11">
    <location>
        <begin position="86"/>
        <end position="108"/>
    </location>
</feature>
<feature type="helix" evidence="11">
    <location>
        <begin position="109"/>
        <end position="111"/>
    </location>
</feature>
<feature type="helix" evidence="11">
    <location>
        <begin position="114"/>
        <end position="131"/>
    </location>
</feature>
<feature type="helix" evidence="11">
    <location>
        <begin position="133"/>
        <end position="142"/>
    </location>
</feature>
<feature type="strand" evidence="11">
    <location>
        <begin position="146"/>
        <end position="149"/>
    </location>
</feature>
<feature type="helix" evidence="11">
    <location>
        <begin position="155"/>
        <end position="170"/>
    </location>
</feature>
<feature type="turn" evidence="11">
    <location>
        <begin position="172"/>
        <end position="177"/>
    </location>
</feature>
<feature type="helix" evidence="11">
    <location>
        <begin position="179"/>
        <end position="189"/>
    </location>
</feature>
<feature type="helix" evidence="11">
    <location>
        <begin position="192"/>
        <end position="198"/>
    </location>
</feature>
<feature type="strand" evidence="10">
    <location>
        <begin position="199"/>
        <end position="203"/>
    </location>
</feature>
<feature type="helix" evidence="11">
    <location>
        <begin position="210"/>
        <end position="220"/>
    </location>
</feature>
<dbReference type="EC" id="2.5.1.18"/>
<dbReference type="EMBL" id="Y13047">
    <property type="protein sequence ID" value="CAA73482.1"/>
    <property type="molecule type" value="mRNA"/>
</dbReference>
<dbReference type="EMBL" id="AF020918">
    <property type="protein sequence ID" value="AAD04711.1"/>
    <property type="molecule type" value="mRNA"/>
</dbReference>
<dbReference type="EMBL" id="AF025887">
    <property type="protein sequence ID" value="AAC39695.1"/>
    <property type="molecule type" value="mRNA"/>
</dbReference>
<dbReference type="EMBL" id="AF125271">
    <property type="protein sequence ID" value="AAD27704.1"/>
    <property type="molecule type" value="mRNA"/>
</dbReference>
<dbReference type="EMBL" id="AF125272">
    <property type="protein sequence ID" value="AAD27705.1"/>
    <property type="molecule type" value="mRNA"/>
</dbReference>
<dbReference type="EMBL" id="AF125273">
    <property type="protein sequence ID" value="AAD27706.1"/>
    <property type="molecule type" value="mRNA"/>
</dbReference>
<dbReference type="EMBL" id="AF050059">
    <property type="protein sequence ID" value="AAC72706.1"/>
    <property type="molecule type" value="Genomic_DNA"/>
</dbReference>
<dbReference type="EMBL" id="AF050054">
    <property type="protein sequence ID" value="AAC72706.1"/>
    <property type="status" value="JOINED"/>
    <property type="molecule type" value="Genomic_DNA"/>
</dbReference>
<dbReference type="EMBL" id="AF050055">
    <property type="protein sequence ID" value="AAC72706.1"/>
    <property type="status" value="JOINED"/>
    <property type="molecule type" value="Genomic_DNA"/>
</dbReference>
<dbReference type="EMBL" id="AF050056">
    <property type="protein sequence ID" value="AAC72706.1"/>
    <property type="status" value="JOINED"/>
    <property type="molecule type" value="Genomic_DNA"/>
</dbReference>
<dbReference type="EMBL" id="AF050057">
    <property type="protein sequence ID" value="AAC72706.1"/>
    <property type="status" value="JOINED"/>
    <property type="molecule type" value="Genomic_DNA"/>
</dbReference>
<dbReference type="EMBL" id="AF050058">
    <property type="protein sequence ID" value="AAC72706.1"/>
    <property type="status" value="JOINED"/>
    <property type="molecule type" value="Genomic_DNA"/>
</dbReference>
<dbReference type="EMBL" id="AY878121">
    <property type="protein sequence ID" value="AAW56075.1"/>
    <property type="molecule type" value="Genomic_DNA"/>
</dbReference>
<dbReference type="EMBL" id="AK315369">
    <property type="protein sequence ID" value="BAG37762.1"/>
    <property type="molecule type" value="mRNA"/>
</dbReference>
<dbReference type="EMBL" id="CR749474">
    <property type="protein sequence ID" value="CAH18304.1"/>
    <property type="molecule type" value="mRNA"/>
</dbReference>
<dbReference type="EMBL" id="AL121969">
    <property type="status" value="NOT_ANNOTATED_CDS"/>
    <property type="molecule type" value="Genomic_DNA"/>
</dbReference>
<dbReference type="EMBL" id="AL162581">
    <property type="status" value="NOT_ANNOTATED_CDS"/>
    <property type="molecule type" value="Genomic_DNA"/>
</dbReference>
<dbReference type="EMBL" id="CH471081">
    <property type="protein sequence ID" value="EAX04393.1"/>
    <property type="molecule type" value="Genomic_DNA"/>
</dbReference>
<dbReference type="EMBL" id="CH471081">
    <property type="protein sequence ID" value="EAX04394.1"/>
    <property type="molecule type" value="Genomic_DNA"/>
</dbReference>
<dbReference type="EMBL" id="CH471081">
    <property type="protein sequence ID" value="EAX04395.1"/>
    <property type="molecule type" value="Genomic_DNA"/>
</dbReference>
<dbReference type="EMBL" id="CH471081">
    <property type="protein sequence ID" value="EAX04396.1"/>
    <property type="molecule type" value="Genomic_DNA"/>
</dbReference>
<dbReference type="EMBL" id="CH471081">
    <property type="protein sequence ID" value="EAX04397.1"/>
    <property type="molecule type" value="Genomic_DNA"/>
</dbReference>
<dbReference type="EMBL" id="BC015523">
    <property type="protein sequence ID" value="AAH15523.1"/>
    <property type="molecule type" value="mRNA"/>
</dbReference>
<dbReference type="EMBL" id="BC063439">
    <property type="protein sequence ID" value="AAH63439.1"/>
    <property type="molecule type" value="mRNA"/>
</dbReference>
<dbReference type="CCDS" id="CCDS4948.1">
    <molecule id="O15217-1"/>
</dbReference>
<dbReference type="RefSeq" id="NP_001503.1">
    <molecule id="O15217-1"/>
    <property type="nucleotide sequence ID" value="NM_001512.4"/>
</dbReference>
<dbReference type="RefSeq" id="XP_005249092.1">
    <molecule id="O15217-1"/>
    <property type="nucleotide sequence ID" value="XM_005249035.5"/>
</dbReference>
<dbReference type="RefSeq" id="XP_054211236.1">
    <molecule id="O15217-1"/>
    <property type="nucleotide sequence ID" value="XM_054355261.1"/>
</dbReference>
<dbReference type="PDB" id="1GUL">
    <property type="method" value="X-ray"/>
    <property type="resolution" value="2.70 A"/>
    <property type="chains" value="A/B/C/D/E/F/G/H=1-222"/>
</dbReference>
<dbReference type="PDB" id="1GUM">
    <property type="method" value="X-ray"/>
    <property type="resolution" value="3.00 A"/>
    <property type="chains" value="A/B/C/D/E/F/G/H=1-222"/>
</dbReference>
<dbReference type="PDB" id="3IK7">
    <property type="method" value="X-ray"/>
    <property type="resolution" value="1.97 A"/>
    <property type="chains" value="A/B/C/D=1-222"/>
</dbReference>
<dbReference type="PDBsum" id="1GUL"/>
<dbReference type="PDBsum" id="1GUM"/>
<dbReference type="PDBsum" id="3IK7"/>
<dbReference type="SMR" id="O15217"/>
<dbReference type="BioGRID" id="109196">
    <property type="interactions" value="24"/>
</dbReference>
<dbReference type="FunCoup" id="O15217">
    <property type="interactions" value="513"/>
</dbReference>
<dbReference type="IntAct" id="O15217">
    <property type="interactions" value="12"/>
</dbReference>
<dbReference type="MINT" id="O15217"/>
<dbReference type="STRING" id="9606.ENSP00000360002"/>
<dbReference type="ChEMBL" id="CHEMBL4933"/>
<dbReference type="DrugBank" id="DB00143">
    <property type="generic name" value="Glutathione"/>
</dbReference>
<dbReference type="iPTMnet" id="O15217"/>
<dbReference type="PhosphoSitePlus" id="O15217"/>
<dbReference type="BioMuta" id="GSTA4"/>
<dbReference type="jPOST" id="O15217"/>
<dbReference type="MassIVE" id="O15217"/>
<dbReference type="PaxDb" id="9606-ENSP00000360002"/>
<dbReference type="PeptideAtlas" id="O15217"/>
<dbReference type="ProteomicsDB" id="48514">
    <molecule id="O15217-1"/>
</dbReference>
<dbReference type="ProteomicsDB" id="66976"/>
<dbReference type="Pumba" id="O15217"/>
<dbReference type="Antibodypedia" id="17233">
    <property type="antibodies" value="315 antibodies from 30 providers"/>
</dbReference>
<dbReference type="DNASU" id="2941"/>
<dbReference type="Ensembl" id="ENST00000370959.1">
    <molecule id="O15217-1"/>
    <property type="protein sequence ID" value="ENSP00000359998.1"/>
    <property type="gene ID" value="ENSG00000170899.11"/>
</dbReference>
<dbReference type="Ensembl" id="ENST00000370960.5">
    <molecule id="O15217-2"/>
    <property type="protein sequence ID" value="ENSP00000359999.1"/>
    <property type="gene ID" value="ENSG00000170899.11"/>
</dbReference>
<dbReference type="Ensembl" id="ENST00000370963.9">
    <molecule id="O15217-1"/>
    <property type="protein sequence ID" value="ENSP00000360002.4"/>
    <property type="gene ID" value="ENSG00000170899.11"/>
</dbReference>
<dbReference type="GeneID" id="2941"/>
<dbReference type="KEGG" id="hsa:2941"/>
<dbReference type="MANE-Select" id="ENST00000370963.9">
    <property type="protein sequence ID" value="ENSP00000360002.4"/>
    <property type="RefSeq nucleotide sequence ID" value="NM_001512.4"/>
    <property type="RefSeq protein sequence ID" value="NP_001503.1"/>
</dbReference>
<dbReference type="UCSC" id="uc003pbf.4">
    <molecule id="O15217-1"/>
    <property type="organism name" value="human"/>
</dbReference>
<dbReference type="AGR" id="HGNC:4629"/>
<dbReference type="CTD" id="2941"/>
<dbReference type="DisGeNET" id="2941"/>
<dbReference type="GeneCards" id="GSTA4"/>
<dbReference type="HGNC" id="HGNC:4629">
    <property type="gene designation" value="GSTA4"/>
</dbReference>
<dbReference type="HPA" id="ENSG00000170899">
    <property type="expression patterns" value="Tissue enhanced (adrenal)"/>
</dbReference>
<dbReference type="MIM" id="605450">
    <property type="type" value="gene"/>
</dbReference>
<dbReference type="neXtProt" id="NX_O15217"/>
<dbReference type="OpenTargets" id="ENSG00000170899"/>
<dbReference type="PharmGKB" id="PA29019"/>
<dbReference type="VEuPathDB" id="HostDB:ENSG00000170899"/>
<dbReference type="eggNOG" id="KOG1695">
    <property type="taxonomic scope" value="Eukaryota"/>
</dbReference>
<dbReference type="GeneTree" id="ENSGT00940000162778"/>
<dbReference type="HOGENOM" id="CLU_039475_4_0_1"/>
<dbReference type="InParanoid" id="O15217"/>
<dbReference type="OMA" id="TVYNVFM"/>
<dbReference type="OrthoDB" id="414243at2759"/>
<dbReference type="PAN-GO" id="O15217">
    <property type="GO annotations" value="3 GO annotations based on evolutionary models"/>
</dbReference>
<dbReference type="PhylomeDB" id="O15217"/>
<dbReference type="TreeFam" id="TF105321"/>
<dbReference type="BRENDA" id="2.5.1.18">
    <property type="organism ID" value="2681"/>
</dbReference>
<dbReference type="PathwayCommons" id="O15217"/>
<dbReference type="Reactome" id="R-HSA-156590">
    <property type="pathway name" value="Glutathione conjugation"/>
</dbReference>
<dbReference type="SignaLink" id="O15217"/>
<dbReference type="SIGNOR" id="O15217"/>
<dbReference type="BioGRID-ORCS" id="2941">
    <property type="hits" value="14 hits in 1156 CRISPR screens"/>
</dbReference>
<dbReference type="CD-CODE" id="91857CE7">
    <property type="entry name" value="Nucleolus"/>
</dbReference>
<dbReference type="ChiTaRS" id="GSTA4">
    <property type="organism name" value="human"/>
</dbReference>
<dbReference type="EvolutionaryTrace" id="O15217"/>
<dbReference type="GeneWiki" id="GSTA4"/>
<dbReference type="GenomeRNAi" id="2941"/>
<dbReference type="Pharos" id="O15217">
    <property type="development level" value="Tbio"/>
</dbReference>
<dbReference type="PRO" id="PR:O15217"/>
<dbReference type="Proteomes" id="UP000005640">
    <property type="component" value="Chromosome 6"/>
</dbReference>
<dbReference type="RNAct" id="O15217">
    <property type="molecule type" value="protein"/>
</dbReference>
<dbReference type="Bgee" id="ENSG00000170899">
    <property type="expression patterns" value="Expressed in adrenal tissue and 218 other cell types or tissues"/>
</dbReference>
<dbReference type="ExpressionAtlas" id="O15217">
    <property type="expression patterns" value="baseline and differential"/>
</dbReference>
<dbReference type="GO" id="GO:0005829">
    <property type="term" value="C:cytosol"/>
    <property type="evidence" value="ECO:0000314"/>
    <property type="project" value="FlyBase"/>
</dbReference>
<dbReference type="GO" id="GO:0004364">
    <property type="term" value="F:glutathione transferase activity"/>
    <property type="evidence" value="ECO:0000314"/>
    <property type="project" value="UniProtKB"/>
</dbReference>
<dbReference type="GO" id="GO:0042802">
    <property type="term" value="F:identical protein binding"/>
    <property type="evidence" value="ECO:0000353"/>
    <property type="project" value="IntAct"/>
</dbReference>
<dbReference type="GO" id="GO:0042803">
    <property type="term" value="F:protein homodimerization activity"/>
    <property type="evidence" value="ECO:0000353"/>
    <property type="project" value="UniProtKB"/>
</dbReference>
<dbReference type="GO" id="GO:0006749">
    <property type="term" value="P:glutathione metabolic process"/>
    <property type="evidence" value="ECO:0000314"/>
    <property type="project" value="UniProtKB"/>
</dbReference>
<dbReference type="GO" id="GO:0006805">
    <property type="term" value="P:xenobiotic metabolic process"/>
    <property type="evidence" value="ECO:0000314"/>
    <property type="project" value="UniProtKB"/>
</dbReference>
<dbReference type="CDD" id="cd03208">
    <property type="entry name" value="GST_C_Alpha"/>
    <property type="match status" value="1"/>
</dbReference>
<dbReference type="FunFam" id="1.20.1050.10:FF:000005">
    <property type="entry name" value="Glutathione S-transferase A1"/>
    <property type="match status" value="1"/>
</dbReference>
<dbReference type="Gene3D" id="1.20.1050.10">
    <property type="match status" value="1"/>
</dbReference>
<dbReference type="Gene3D" id="3.40.30.10">
    <property type="entry name" value="Glutaredoxin"/>
    <property type="match status" value="1"/>
</dbReference>
<dbReference type="InterPro" id="IPR010987">
    <property type="entry name" value="Glutathione-S-Trfase_C-like"/>
</dbReference>
<dbReference type="InterPro" id="IPR036282">
    <property type="entry name" value="Glutathione-S-Trfase_C_sf"/>
</dbReference>
<dbReference type="InterPro" id="IPR040079">
    <property type="entry name" value="Glutathione_S-Trfase"/>
</dbReference>
<dbReference type="InterPro" id="IPR004045">
    <property type="entry name" value="Glutathione_S-Trfase_N"/>
</dbReference>
<dbReference type="InterPro" id="IPR003080">
    <property type="entry name" value="GST_alpha"/>
</dbReference>
<dbReference type="InterPro" id="IPR004046">
    <property type="entry name" value="GST_C"/>
</dbReference>
<dbReference type="InterPro" id="IPR050213">
    <property type="entry name" value="GST_superfamily"/>
</dbReference>
<dbReference type="InterPro" id="IPR036249">
    <property type="entry name" value="Thioredoxin-like_sf"/>
</dbReference>
<dbReference type="PANTHER" id="PTHR11571">
    <property type="entry name" value="GLUTATHIONE S-TRANSFERASE"/>
    <property type="match status" value="1"/>
</dbReference>
<dbReference type="PANTHER" id="PTHR11571:SF123">
    <property type="entry name" value="GLUTATHIONE S-TRANSFERASE A4"/>
    <property type="match status" value="1"/>
</dbReference>
<dbReference type="Pfam" id="PF14497">
    <property type="entry name" value="GST_C_3"/>
    <property type="match status" value="1"/>
</dbReference>
<dbReference type="Pfam" id="PF02798">
    <property type="entry name" value="GST_N"/>
    <property type="match status" value="1"/>
</dbReference>
<dbReference type="PRINTS" id="PR01266">
    <property type="entry name" value="GSTRNSFRASEA"/>
</dbReference>
<dbReference type="SFLD" id="SFLDG01205">
    <property type="entry name" value="AMPS.1"/>
    <property type="match status" value="1"/>
</dbReference>
<dbReference type="SFLD" id="SFLDS00019">
    <property type="entry name" value="Glutathione_Transferase_(cytos"/>
    <property type="match status" value="1"/>
</dbReference>
<dbReference type="SUPFAM" id="SSF47616">
    <property type="entry name" value="GST C-terminal domain-like"/>
    <property type="match status" value="1"/>
</dbReference>
<dbReference type="SUPFAM" id="SSF52833">
    <property type="entry name" value="Thioredoxin-like"/>
    <property type="match status" value="1"/>
</dbReference>
<dbReference type="PROSITE" id="PS50405">
    <property type="entry name" value="GST_CTER"/>
    <property type="match status" value="1"/>
</dbReference>
<dbReference type="PROSITE" id="PS50404">
    <property type="entry name" value="GST_NTER"/>
    <property type="match status" value="1"/>
</dbReference>
<accession>O15217</accession>
<accession>B2RD15</accession>
<accession>Q5T7Q8</accession>
<accession>Q6P4G1</accession>
<accession>Q9BX18</accession>
<accession>Q9H414</accession>
<sequence length="222" mass="25704">MAARPKLHYPNGRGRMESVRWVLAAAGVEFDEEFLETKEQLYKLQDGNHLLFQQVPMVEIDGMKLVQTRSILHYIADKHNLFGKNLKERTLIDMYVEGTLDLLELLIMHPFLKPDDQQKEVVNMAQKAIIRYFPVFEKILRGHGQSFLVGNQLSLADVILLQTILALEEKIPNILSAFPFLQEYTVKLSNIPTIKRFLEPGSKKKPPPDEIYVRTVYNIFRP</sequence>
<gene>
    <name type="primary">GSTA4</name>
</gene>
<keyword id="KW-0002">3D-structure</keyword>
<keyword id="KW-0007">Acetylation</keyword>
<keyword id="KW-0025">Alternative splicing</keyword>
<keyword id="KW-0963">Cytoplasm</keyword>
<keyword id="KW-1267">Proteomics identification</keyword>
<keyword id="KW-1185">Reference proteome</keyword>
<keyword id="KW-0808">Transferase</keyword>
<name>GSTA4_HUMAN</name>
<protein>
    <recommendedName>
        <fullName>Glutathione S-transferase A4</fullName>
        <ecNumber>2.5.1.18</ecNumber>
    </recommendedName>
    <alternativeName>
        <fullName>GST class-alpha member 4</fullName>
    </alternativeName>
    <alternativeName>
        <fullName>Glutathione S-transferase A4-4</fullName>
    </alternativeName>
</protein>
<evidence type="ECO:0000250" key="1">
    <source>
        <dbReference type="UniProtKB" id="P13745"/>
    </source>
</evidence>
<evidence type="ECO:0000250" key="2">
    <source>
        <dbReference type="UniProtKB" id="P14942"/>
    </source>
</evidence>
<evidence type="ECO:0000250" key="3">
    <source>
        <dbReference type="UniProtKB" id="P30711"/>
    </source>
</evidence>
<evidence type="ECO:0000269" key="4">
    <source>
    </source>
</evidence>
<evidence type="ECO:0000269" key="5">
    <source>
    </source>
</evidence>
<evidence type="ECO:0000269" key="6">
    <source ref="6"/>
</evidence>
<evidence type="ECO:0000303" key="7">
    <source>
    </source>
</evidence>
<evidence type="ECO:0000303" key="8">
    <source>
    </source>
</evidence>
<evidence type="ECO:0000305" key="9"/>
<evidence type="ECO:0007829" key="10">
    <source>
        <dbReference type="PDB" id="1GUM"/>
    </source>
</evidence>
<evidence type="ECO:0007829" key="11">
    <source>
        <dbReference type="PDB" id="3IK7"/>
    </source>
</evidence>
<organism>
    <name type="scientific">Homo sapiens</name>
    <name type="common">Human</name>
    <dbReference type="NCBI Taxonomy" id="9606"/>
    <lineage>
        <taxon>Eukaryota</taxon>
        <taxon>Metazoa</taxon>
        <taxon>Chordata</taxon>
        <taxon>Craniata</taxon>
        <taxon>Vertebrata</taxon>
        <taxon>Euteleostomi</taxon>
        <taxon>Mammalia</taxon>
        <taxon>Eutheria</taxon>
        <taxon>Euarchontoglires</taxon>
        <taxon>Primates</taxon>
        <taxon>Haplorrhini</taxon>
        <taxon>Catarrhini</taxon>
        <taxon>Hominidae</taxon>
        <taxon>Homo</taxon>
    </lineage>
</organism>
<proteinExistence type="evidence at protein level"/>
<reference key="1">
    <citation type="journal article" date="1998" name="Biochem. J.">
        <title>Human glutathione transferase A4-4: an alpha class enzyme with high catalytic efficiency in the conjugation of 4-hydroxynonenal and other genotoxic products of lipid peroxidation.</title>
        <authorList>
            <person name="Hubatsch I."/>
            <person name="Ridderstrom M."/>
            <person name="Mannervik B."/>
        </authorList>
    </citation>
    <scope>NUCLEOTIDE SEQUENCE [MRNA] (ISOFORM 1)</scope>
    <source>
        <tissue>Brain</tissue>
    </source>
</reference>
<reference key="2">
    <citation type="journal article" date="1998" name="Biochem. J.">
        <title>Identification of cDNAs encoding two human alpha class glutathione transferases (GSTA3 and GSTA4) and the heterologous expression of GSTA4-4.</title>
        <authorList>
            <person name="Board P.G."/>
        </authorList>
    </citation>
    <scope>NUCLEOTIDE SEQUENCE [MRNA] (ISOFORM 1)</scope>
</reference>
<reference key="3">
    <citation type="journal article" date="1998" name="Arch. Biochem. Biophys.">
        <title>Identification of a novel human glutathione S-transferase using bioinformatics.</title>
        <authorList>
            <person name="Liu S."/>
            <person name="Stoesz S.P."/>
            <person name="Pickett C.B."/>
        </authorList>
    </citation>
    <scope>NUCLEOTIDE SEQUENCE [MRNA] (ISOFORM 1)</scope>
</reference>
<reference key="4">
    <citation type="submission" date="1999-02" db="EMBL/GenBank/DDBJ databases">
        <title>The 4-HNE metabolizing GST isozyme hGSTA4-4 is expressed in human heart, pancreas, and skeletal muscle.</title>
        <authorList>
            <person name="Piper J.T."/>
            <person name="Awasthi Y.C."/>
        </authorList>
    </citation>
    <scope>NUCLEOTIDE SEQUENCE [MRNA] (ISOFORM 1)</scope>
    <source>
        <tissue>Heart</tissue>
        <tissue>Pancreas</tissue>
        <tissue>Skeletal muscle</tissue>
    </source>
</reference>
<reference key="5">
    <citation type="journal article" date="1998" name="Biochem. J.">
        <title>Genomic organization, 5'-flanking region and chromosomal localization of the human glutathione transferase A4 gene.</title>
        <authorList>
            <person name="Desmots F."/>
            <person name="Rauch C."/>
            <person name="Henry C."/>
            <person name="Guillouzo A."/>
            <person name="Morel F."/>
        </authorList>
    </citation>
    <scope>NUCLEOTIDE SEQUENCE [GENOMIC DNA]</scope>
</reference>
<reference key="6">
    <citation type="submission" date="2005-01" db="EMBL/GenBank/DDBJ databases">
        <authorList>
            <consortium name="NIEHS SNPs program"/>
        </authorList>
    </citation>
    <scope>NUCLEOTIDE SEQUENCE [GENOMIC DNA]</scope>
    <scope>VARIANTS PRO-100 AND ALA-163</scope>
</reference>
<reference key="7">
    <citation type="journal article" date="2004" name="Nat. Genet.">
        <title>Complete sequencing and characterization of 21,243 full-length human cDNAs.</title>
        <authorList>
            <person name="Ota T."/>
            <person name="Suzuki Y."/>
            <person name="Nishikawa T."/>
            <person name="Otsuki T."/>
            <person name="Sugiyama T."/>
            <person name="Irie R."/>
            <person name="Wakamatsu A."/>
            <person name="Hayashi K."/>
            <person name="Sato H."/>
            <person name="Nagai K."/>
            <person name="Kimura K."/>
            <person name="Makita H."/>
            <person name="Sekine M."/>
            <person name="Obayashi M."/>
            <person name="Nishi T."/>
            <person name="Shibahara T."/>
            <person name="Tanaka T."/>
            <person name="Ishii S."/>
            <person name="Yamamoto J."/>
            <person name="Saito K."/>
            <person name="Kawai Y."/>
            <person name="Isono Y."/>
            <person name="Nakamura Y."/>
            <person name="Nagahari K."/>
            <person name="Murakami K."/>
            <person name="Yasuda T."/>
            <person name="Iwayanagi T."/>
            <person name="Wagatsuma M."/>
            <person name="Shiratori A."/>
            <person name="Sudo H."/>
            <person name="Hosoiri T."/>
            <person name="Kaku Y."/>
            <person name="Kodaira H."/>
            <person name="Kondo H."/>
            <person name="Sugawara M."/>
            <person name="Takahashi M."/>
            <person name="Kanda K."/>
            <person name="Yokoi T."/>
            <person name="Furuya T."/>
            <person name="Kikkawa E."/>
            <person name="Omura Y."/>
            <person name="Abe K."/>
            <person name="Kamihara K."/>
            <person name="Katsuta N."/>
            <person name="Sato K."/>
            <person name="Tanikawa M."/>
            <person name="Yamazaki M."/>
            <person name="Ninomiya K."/>
            <person name="Ishibashi T."/>
            <person name="Yamashita H."/>
            <person name="Murakawa K."/>
            <person name="Fujimori K."/>
            <person name="Tanai H."/>
            <person name="Kimata M."/>
            <person name="Watanabe M."/>
            <person name="Hiraoka S."/>
            <person name="Chiba Y."/>
            <person name="Ishida S."/>
            <person name="Ono Y."/>
            <person name="Takiguchi S."/>
            <person name="Watanabe S."/>
            <person name="Yosida M."/>
            <person name="Hotuta T."/>
            <person name="Kusano J."/>
            <person name="Kanehori K."/>
            <person name="Takahashi-Fujii A."/>
            <person name="Hara H."/>
            <person name="Tanase T.-O."/>
            <person name="Nomura Y."/>
            <person name="Togiya S."/>
            <person name="Komai F."/>
            <person name="Hara R."/>
            <person name="Takeuchi K."/>
            <person name="Arita M."/>
            <person name="Imose N."/>
            <person name="Musashino K."/>
            <person name="Yuuki H."/>
            <person name="Oshima A."/>
            <person name="Sasaki N."/>
            <person name="Aotsuka S."/>
            <person name="Yoshikawa Y."/>
            <person name="Matsunawa H."/>
            <person name="Ichihara T."/>
            <person name="Shiohata N."/>
            <person name="Sano S."/>
            <person name="Moriya S."/>
            <person name="Momiyama H."/>
            <person name="Satoh N."/>
            <person name="Takami S."/>
            <person name="Terashima Y."/>
            <person name="Suzuki O."/>
            <person name="Nakagawa S."/>
            <person name="Senoh A."/>
            <person name="Mizoguchi H."/>
            <person name="Goto Y."/>
            <person name="Shimizu F."/>
            <person name="Wakebe H."/>
            <person name="Hishigaki H."/>
            <person name="Watanabe T."/>
            <person name="Sugiyama A."/>
            <person name="Takemoto M."/>
            <person name="Kawakami B."/>
            <person name="Yamazaki M."/>
            <person name="Watanabe K."/>
            <person name="Kumagai A."/>
            <person name="Itakura S."/>
            <person name="Fukuzumi Y."/>
            <person name="Fujimori Y."/>
            <person name="Komiyama M."/>
            <person name="Tashiro H."/>
            <person name="Tanigami A."/>
            <person name="Fujiwara T."/>
            <person name="Ono T."/>
            <person name="Yamada K."/>
            <person name="Fujii Y."/>
            <person name="Ozaki K."/>
            <person name="Hirao M."/>
            <person name="Ohmori Y."/>
            <person name="Kawabata A."/>
            <person name="Hikiji T."/>
            <person name="Kobatake N."/>
            <person name="Inagaki H."/>
            <person name="Ikema Y."/>
            <person name="Okamoto S."/>
            <person name="Okitani R."/>
            <person name="Kawakami T."/>
            <person name="Noguchi S."/>
            <person name="Itoh T."/>
            <person name="Shigeta K."/>
            <person name="Senba T."/>
            <person name="Matsumura K."/>
            <person name="Nakajima Y."/>
            <person name="Mizuno T."/>
            <person name="Morinaga M."/>
            <person name="Sasaki M."/>
            <person name="Togashi T."/>
            <person name="Oyama M."/>
            <person name="Hata H."/>
            <person name="Watanabe M."/>
            <person name="Komatsu T."/>
            <person name="Mizushima-Sugano J."/>
            <person name="Satoh T."/>
            <person name="Shirai Y."/>
            <person name="Takahashi Y."/>
            <person name="Nakagawa K."/>
            <person name="Okumura K."/>
            <person name="Nagase T."/>
            <person name="Nomura N."/>
            <person name="Kikuchi H."/>
            <person name="Masuho Y."/>
            <person name="Yamashita R."/>
            <person name="Nakai K."/>
            <person name="Yada T."/>
            <person name="Nakamura Y."/>
            <person name="Ohara O."/>
            <person name="Isogai T."/>
            <person name="Sugano S."/>
        </authorList>
    </citation>
    <scope>NUCLEOTIDE SEQUENCE [LARGE SCALE MRNA] (ISOFORM 1)</scope>
    <source>
        <tissue>Cerebellum</tissue>
    </source>
</reference>
<reference key="8">
    <citation type="journal article" date="2007" name="BMC Genomics">
        <title>The full-ORF clone resource of the German cDNA consortium.</title>
        <authorList>
            <person name="Bechtel S."/>
            <person name="Rosenfelder H."/>
            <person name="Duda A."/>
            <person name="Schmidt C.P."/>
            <person name="Ernst U."/>
            <person name="Wellenreuther R."/>
            <person name="Mehrle A."/>
            <person name="Schuster C."/>
            <person name="Bahr A."/>
            <person name="Bloecker H."/>
            <person name="Heubner D."/>
            <person name="Hoerlein A."/>
            <person name="Michel G."/>
            <person name="Wedler H."/>
            <person name="Koehrer K."/>
            <person name="Ottenwaelder B."/>
            <person name="Poustka A."/>
            <person name="Wiemann S."/>
            <person name="Schupp I."/>
        </authorList>
    </citation>
    <scope>NUCLEOTIDE SEQUENCE [LARGE SCALE MRNA] (ISOFORM 2)</scope>
    <source>
        <tissue>Esophageal carcinoma</tissue>
    </source>
</reference>
<reference key="9">
    <citation type="journal article" date="2003" name="Nature">
        <title>The DNA sequence and analysis of human chromosome 6.</title>
        <authorList>
            <person name="Mungall A.J."/>
            <person name="Palmer S.A."/>
            <person name="Sims S.K."/>
            <person name="Edwards C.A."/>
            <person name="Ashurst J.L."/>
            <person name="Wilming L."/>
            <person name="Jones M.C."/>
            <person name="Horton R."/>
            <person name="Hunt S.E."/>
            <person name="Scott C.E."/>
            <person name="Gilbert J.G.R."/>
            <person name="Clamp M.E."/>
            <person name="Bethel G."/>
            <person name="Milne S."/>
            <person name="Ainscough R."/>
            <person name="Almeida J.P."/>
            <person name="Ambrose K.D."/>
            <person name="Andrews T.D."/>
            <person name="Ashwell R.I.S."/>
            <person name="Babbage A.K."/>
            <person name="Bagguley C.L."/>
            <person name="Bailey J."/>
            <person name="Banerjee R."/>
            <person name="Barker D.J."/>
            <person name="Barlow K.F."/>
            <person name="Bates K."/>
            <person name="Beare D.M."/>
            <person name="Beasley H."/>
            <person name="Beasley O."/>
            <person name="Bird C.P."/>
            <person name="Blakey S.E."/>
            <person name="Bray-Allen S."/>
            <person name="Brook J."/>
            <person name="Brown A.J."/>
            <person name="Brown J.Y."/>
            <person name="Burford D.C."/>
            <person name="Burrill W."/>
            <person name="Burton J."/>
            <person name="Carder C."/>
            <person name="Carter N.P."/>
            <person name="Chapman J.C."/>
            <person name="Clark S.Y."/>
            <person name="Clark G."/>
            <person name="Clee C.M."/>
            <person name="Clegg S."/>
            <person name="Cobley V."/>
            <person name="Collier R.E."/>
            <person name="Collins J.E."/>
            <person name="Colman L.K."/>
            <person name="Corby N.R."/>
            <person name="Coville G.J."/>
            <person name="Culley K.M."/>
            <person name="Dhami P."/>
            <person name="Davies J."/>
            <person name="Dunn M."/>
            <person name="Earthrowl M.E."/>
            <person name="Ellington A.E."/>
            <person name="Evans K.A."/>
            <person name="Faulkner L."/>
            <person name="Francis M.D."/>
            <person name="Frankish A."/>
            <person name="Frankland J."/>
            <person name="French L."/>
            <person name="Garner P."/>
            <person name="Garnett J."/>
            <person name="Ghori M.J."/>
            <person name="Gilby L.M."/>
            <person name="Gillson C.J."/>
            <person name="Glithero R.J."/>
            <person name="Grafham D.V."/>
            <person name="Grant M."/>
            <person name="Gribble S."/>
            <person name="Griffiths C."/>
            <person name="Griffiths M.N.D."/>
            <person name="Hall R."/>
            <person name="Halls K.S."/>
            <person name="Hammond S."/>
            <person name="Harley J.L."/>
            <person name="Hart E.A."/>
            <person name="Heath P.D."/>
            <person name="Heathcott R."/>
            <person name="Holmes S.J."/>
            <person name="Howden P.J."/>
            <person name="Howe K.L."/>
            <person name="Howell G.R."/>
            <person name="Huckle E."/>
            <person name="Humphray S.J."/>
            <person name="Humphries M.D."/>
            <person name="Hunt A.R."/>
            <person name="Johnson C.M."/>
            <person name="Joy A.A."/>
            <person name="Kay M."/>
            <person name="Keenan S.J."/>
            <person name="Kimberley A.M."/>
            <person name="King A."/>
            <person name="Laird G.K."/>
            <person name="Langford C."/>
            <person name="Lawlor S."/>
            <person name="Leongamornlert D.A."/>
            <person name="Leversha M."/>
            <person name="Lloyd C.R."/>
            <person name="Lloyd D.M."/>
            <person name="Loveland J.E."/>
            <person name="Lovell J."/>
            <person name="Martin S."/>
            <person name="Mashreghi-Mohammadi M."/>
            <person name="Maslen G.L."/>
            <person name="Matthews L."/>
            <person name="McCann O.T."/>
            <person name="McLaren S.J."/>
            <person name="McLay K."/>
            <person name="McMurray A."/>
            <person name="Moore M.J.F."/>
            <person name="Mullikin J.C."/>
            <person name="Niblett D."/>
            <person name="Nickerson T."/>
            <person name="Novik K.L."/>
            <person name="Oliver K."/>
            <person name="Overton-Larty E.K."/>
            <person name="Parker A."/>
            <person name="Patel R."/>
            <person name="Pearce A.V."/>
            <person name="Peck A.I."/>
            <person name="Phillimore B.J.C.T."/>
            <person name="Phillips S."/>
            <person name="Plumb R.W."/>
            <person name="Porter K.M."/>
            <person name="Ramsey Y."/>
            <person name="Ranby S.A."/>
            <person name="Rice C.M."/>
            <person name="Ross M.T."/>
            <person name="Searle S.M."/>
            <person name="Sehra H.K."/>
            <person name="Sheridan E."/>
            <person name="Skuce C.D."/>
            <person name="Smith S."/>
            <person name="Smith M."/>
            <person name="Spraggon L."/>
            <person name="Squares S.L."/>
            <person name="Steward C.A."/>
            <person name="Sycamore N."/>
            <person name="Tamlyn-Hall G."/>
            <person name="Tester J."/>
            <person name="Theaker A.J."/>
            <person name="Thomas D.W."/>
            <person name="Thorpe A."/>
            <person name="Tracey A."/>
            <person name="Tromans A."/>
            <person name="Tubby B."/>
            <person name="Wall M."/>
            <person name="Wallis J.M."/>
            <person name="West A.P."/>
            <person name="White S.S."/>
            <person name="Whitehead S.L."/>
            <person name="Whittaker H."/>
            <person name="Wild A."/>
            <person name="Willey D.J."/>
            <person name="Wilmer T.E."/>
            <person name="Wood J.M."/>
            <person name="Wray P.W."/>
            <person name="Wyatt J.C."/>
            <person name="Young L."/>
            <person name="Younger R.M."/>
            <person name="Bentley D.R."/>
            <person name="Coulson A."/>
            <person name="Durbin R.M."/>
            <person name="Hubbard T."/>
            <person name="Sulston J.E."/>
            <person name="Dunham I."/>
            <person name="Rogers J."/>
            <person name="Beck S."/>
        </authorList>
    </citation>
    <scope>NUCLEOTIDE SEQUENCE [LARGE SCALE GENOMIC DNA]</scope>
</reference>
<reference key="10">
    <citation type="submission" date="2005-07" db="EMBL/GenBank/DDBJ databases">
        <authorList>
            <person name="Mural R.J."/>
            <person name="Istrail S."/>
            <person name="Sutton G.G."/>
            <person name="Florea L."/>
            <person name="Halpern A.L."/>
            <person name="Mobarry C.M."/>
            <person name="Lippert R."/>
            <person name="Walenz B."/>
            <person name="Shatkay H."/>
            <person name="Dew I."/>
            <person name="Miller J.R."/>
            <person name="Flanigan M.J."/>
            <person name="Edwards N.J."/>
            <person name="Bolanos R."/>
            <person name="Fasulo D."/>
            <person name="Halldorsson B.V."/>
            <person name="Hannenhalli S."/>
            <person name="Turner R."/>
            <person name="Yooseph S."/>
            <person name="Lu F."/>
            <person name="Nusskern D.R."/>
            <person name="Shue B.C."/>
            <person name="Zheng X.H."/>
            <person name="Zhong F."/>
            <person name="Delcher A.L."/>
            <person name="Huson D.H."/>
            <person name="Kravitz S.A."/>
            <person name="Mouchard L."/>
            <person name="Reinert K."/>
            <person name="Remington K.A."/>
            <person name="Clark A.G."/>
            <person name="Waterman M.S."/>
            <person name="Eichler E.E."/>
            <person name="Adams M.D."/>
            <person name="Hunkapiller M.W."/>
            <person name="Myers E.W."/>
            <person name="Venter J.C."/>
        </authorList>
    </citation>
    <scope>NUCLEOTIDE SEQUENCE [LARGE SCALE GENOMIC DNA]</scope>
</reference>
<reference key="11">
    <citation type="journal article" date="2004" name="Genome Res.">
        <title>The status, quality, and expansion of the NIH full-length cDNA project: the Mammalian Gene Collection (MGC).</title>
        <authorList>
            <consortium name="The MGC Project Team"/>
        </authorList>
    </citation>
    <scope>NUCLEOTIDE SEQUENCE [LARGE SCALE MRNA] (ISOFORMS 1 AND 2)</scope>
    <source>
        <tissue>Brain</tissue>
        <tissue>Uterus</tissue>
    </source>
</reference>
<reference key="12">
    <citation type="journal article" date="1999" name="J. Mol. Biol.">
        <title>Human glutathione transferase A4-4 crystal structures and mutagenesis reveal the basis of high catalytic efficiency with toxic lipid peroxidation products.</title>
        <authorList>
            <person name="Bruns C.M."/>
            <person name="Hubatsch I."/>
            <person name="Ridderstroem M."/>
            <person name="Mannervik B."/>
            <person name="Tainer J.A."/>
        </authorList>
    </citation>
    <scope>X-RAY CRYSTALLOGRAPHY (2.7 ANGSTROMS) IN COMPLEX WITH 2-IODOBENZYL GLUTATHIONE</scope>
    <scope>CATALYTIC ACTIVITY</scope>
    <scope>FUNCTION</scope>
    <scope>MUTAGENESIS OF TYR-212</scope>
    <scope>SUBUNIT</scope>
</reference>
<reference key="13">
    <citation type="journal article" date="2010" name="Biochemistry">
        <title>Substrate specificity combined with stereopromiscuity in glutathione transferase A4-4-dependent metabolism of 4-hydroxynonenal.</title>
        <authorList>
            <person name="Balogh L.M."/>
            <person name="Le Trong I."/>
            <person name="Kripps K.A."/>
            <person name="Shireman L.M."/>
            <person name="Stenkamp R.E."/>
            <person name="Zhang W."/>
            <person name="Mannervik B."/>
            <person name="Atkins W.M."/>
        </authorList>
    </citation>
    <scope>X-RAY CRYSTALLOGRAPHY (1.97 ANGSTROMS) IN COMPLEX WITH SUBSTRATE ANALOG</scope>
    <scope>CATALYTIC ACTIVITY</scope>
    <scope>FUNCTION</scope>
    <scope>MUTAGENESIS OF TYR-9</scope>
</reference>
<comment type="function">
    <text evidence="4 5">Conjugation of reduced glutathione to a wide number of exogenous and endogenous hydrophobic electrophiles. This isozyme has a high catalytic efficiency with 4-hydroxyalkenals such as 4-hydroxynonenal (4-HNE).</text>
</comment>
<comment type="catalytic activity">
    <reaction evidence="4 5">
        <text>RX + glutathione = an S-substituted glutathione + a halide anion + H(+)</text>
        <dbReference type="Rhea" id="RHEA:16437"/>
        <dbReference type="ChEBI" id="CHEBI:15378"/>
        <dbReference type="ChEBI" id="CHEBI:16042"/>
        <dbReference type="ChEBI" id="CHEBI:17792"/>
        <dbReference type="ChEBI" id="CHEBI:57925"/>
        <dbReference type="ChEBI" id="CHEBI:90779"/>
        <dbReference type="EC" id="2.5.1.18"/>
    </reaction>
</comment>
<comment type="subunit">
    <text evidence="4 5">Homodimer.</text>
</comment>
<comment type="interaction">
    <interactant intactId="EBI-752440">
        <id>O15217</id>
    </interactant>
    <interactant intactId="EBI-10290932">
        <id>Q96LR7</id>
        <label>C2orf50</label>
    </interactant>
    <organismsDiffer>false</organismsDiffer>
    <experiments>6</experiments>
</comment>
<comment type="interaction">
    <interactant intactId="EBI-752440">
        <id>O15217</id>
    </interactant>
    <interactant intactId="EBI-1052570">
        <id>O95995</id>
        <label>GAS8</label>
    </interactant>
    <organismsDiffer>false</organismsDiffer>
    <experiments>3</experiments>
</comment>
<comment type="interaction">
    <interactant intactId="EBI-752440">
        <id>O15217</id>
    </interactant>
    <interactant intactId="EBI-10196201">
        <id>P09210</id>
        <label>GSTA2</label>
    </interactant>
    <organismsDiffer>false</organismsDiffer>
    <experiments>13</experiments>
</comment>
<comment type="interaction">
    <interactant intactId="EBI-752440">
        <id>O15217</id>
    </interactant>
    <interactant intactId="EBI-752440">
        <id>O15217</id>
        <label>GSTA4</label>
    </interactant>
    <organismsDiffer>false</organismsDiffer>
    <experiments>5</experiments>
</comment>
<comment type="interaction">
    <interactant intactId="EBI-752440">
        <id>O15217</id>
    </interactant>
    <interactant intactId="EBI-347619">
        <id>O15116</id>
        <label>LSM1</label>
    </interactant>
    <organismsDiffer>false</organismsDiffer>
    <experiments>3</experiments>
</comment>
<comment type="interaction">
    <interactant intactId="EBI-752440">
        <id>O15217</id>
    </interactant>
    <interactant intactId="EBI-741158">
        <id>Q96HA8</id>
        <label>NTAQ1</label>
    </interactant>
    <organismsDiffer>false</organismsDiffer>
    <experiments>3</experiments>
</comment>
<comment type="subcellular location">
    <subcellularLocation>
        <location>Cytoplasm</location>
    </subcellularLocation>
</comment>
<comment type="alternative products">
    <event type="alternative splicing"/>
    <isoform>
        <id>O15217-1</id>
        <name>1</name>
        <sequence type="displayed"/>
    </isoform>
    <isoform>
        <id>O15217-2</id>
        <name>2</name>
        <sequence type="described" ref="VSP_056473"/>
    </isoform>
</comment>
<comment type="tissue specificity">
    <text>Expressed at a high level in brain, placenta, and skeletal muscle and much lower in lung and liver.</text>
</comment>
<comment type="similarity">
    <text evidence="9">Belongs to the GST superfamily. Alpha family.</text>
</comment>